<evidence type="ECO:0000250" key="1"/>
<evidence type="ECO:0000250" key="2">
    <source>
        <dbReference type="UniProtKB" id="A0A0H3MD02"/>
    </source>
</evidence>
<evidence type="ECO:0000255" key="3"/>
<evidence type="ECO:0000256" key="4">
    <source>
        <dbReference type="SAM" id="MobiDB-lite"/>
    </source>
</evidence>
<evidence type="ECO:0000305" key="5"/>
<comment type="function">
    <text evidence="2">Chlamydia replicate within an intracellular vacuole, termed an inclusion. IncA is probably involved in the homotypic fusion of inclusions.</text>
</comment>
<comment type="subunit">
    <text evidence="2">Forms homooligomers.</text>
</comment>
<comment type="subcellular location">
    <subcellularLocation>
        <location evidence="2">Secreted</location>
    </subcellularLocation>
    <subcellularLocation>
        <location evidence="5">Host vacuole</location>
        <location evidence="5">Host pathogen-containing vacuole</location>
        <location evidence="5">Host pathogen-containing vacuole membrane</location>
        <topology evidence="2">Multi-pass membrane protein</topology>
    </subcellularLocation>
    <text evidence="1 2">Secreted, probably by a type III secretion system (By similarity). Localized in inclusion membrane (By similarity). In the inclusion, the C-terminus faces the host cytosol (By similarity).</text>
</comment>
<comment type="domain">
    <text evidence="2">IncA proteins share the same general organization: a short N-terminal domain, a large bilobed hydrophobic domain, and a C-terminal cytoplasmic domain.</text>
</comment>
<comment type="similarity">
    <text evidence="5">Belongs to the IncA family.</text>
</comment>
<organism>
    <name type="scientific">Chlamydia trachomatis serovar G (strain G/9301)</name>
    <dbReference type="NCBI Taxonomy" id="718219"/>
    <lineage>
        <taxon>Bacteria</taxon>
        <taxon>Pseudomonadati</taxon>
        <taxon>Chlamydiota</taxon>
        <taxon>Chlamydiia</taxon>
        <taxon>Chlamydiales</taxon>
        <taxon>Chlamydiaceae</taxon>
        <taxon>Chlamydia/Chlamydophila group</taxon>
        <taxon>Chlamydia</taxon>
    </lineage>
</organism>
<reference key="1">
    <citation type="journal article" date="2002" name="Microbiology">
        <title>Diversity within inc genes of clinical Chlamydia trachomatis variant isolates that occupy non-fusogenic inclusions.</title>
        <authorList>
            <person name="Rockey D.D."/>
            <person name="Viratyosin W."/>
            <person name="Bannantine J.P."/>
            <person name="Suchland R.J."/>
            <person name="Stamm W.E."/>
        </authorList>
    </citation>
    <scope>NUCLEOTIDE SEQUENCE [GENOMIC DNA]</scope>
</reference>
<reference key="2">
    <citation type="journal article" date="2010" name="Infect. Immun.">
        <title>Genome sequencing of recent clinical Chlamydia trachomatis strains identifies loci associated with tissue tropism and regions of apparent recombination.</title>
        <authorList>
            <person name="Jeffrey B.M."/>
            <person name="Suchland R.J."/>
            <person name="Quinn K.L."/>
            <person name="Davidson J.R."/>
            <person name="Stamm W.E."/>
            <person name="Rockey D.D."/>
        </authorList>
    </citation>
    <scope>NUCLEOTIDE SEQUENCE [LARGE SCALE GENOMIC DNA]</scope>
    <source>
        <strain>G/9301</strain>
    </source>
</reference>
<proteinExistence type="inferred from homology"/>
<accession>D6YXE8</accession>
<accession>O84121</accession>
<accession>Q99Q56</accession>
<accession>Q9AM94</accession>
<accession>Q9AMA7</accession>
<accession>Q9AMA8</accession>
<accession>Q9AMA9</accession>
<accession>Q9AMB0</accession>
<accession>Q9AMB1</accession>
<accession>Q9F7K9</accession>
<accession>Q9RFX7</accession>
<keyword id="KW-0175">Coiled coil</keyword>
<keyword id="KW-1043">Host membrane</keyword>
<keyword id="KW-0472">Membrane</keyword>
<keyword id="KW-0964">Secreted</keyword>
<keyword id="KW-0812">Transmembrane</keyword>
<keyword id="KW-1133">Transmembrane helix</keyword>
<keyword id="KW-0843">Virulence</keyword>
<protein>
    <recommendedName>
        <fullName>Inclusion membrane protein A</fullName>
    </recommendedName>
</protein>
<gene>
    <name type="primary">incA</name>
    <name type="ordered locus">CTG9301_00615</name>
</gene>
<name>INCA_CHLT9</name>
<sequence length="273" mass="30327">MTTPTLIVTPPSPPAPSYSANRVPQPSLMDKIKKIAAIASLILIGTIGFLALLGHLVGFLIAPQITIVLLALFIISLAGNALYLQKTANLHLYQDLQREVGSLKEINFMLSVLQKEFLHLSKEFATTSKDLSAVSQDFYSCLQGFRDNYKGFESLLDEYKNSTEEMRKLFSQEIIADLKGSVASLREEIRFLTPLAEEVRRLAHNQQSLTVVIEELKTIRDSLRDEIGQLSQLSKTLTSQIALQRKESSDLCSQIRETLSSPRKSASPSTKSS</sequence>
<dbReference type="EMBL" id="AF327329">
    <property type="protein sequence ID" value="AAK11233.1"/>
    <property type="molecule type" value="Genomic_DNA"/>
</dbReference>
<dbReference type="EMBL" id="CP001930">
    <property type="protein sequence ID" value="ADH96752.1"/>
    <property type="molecule type" value="Genomic_DNA"/>
</dbReference>
<dbReference type="RefSeq" id="WP_009871466.1">
    <property type="nucleotide sequence ID" value="NC_017432.1"/>
</dbReference>
<dbReference type="SMR" id="D6YXE8"/>
<dbReference type="KEGG" id="ctv:CTG9301_00615"/>
<dbReference type="PATRIC" id="fig|718219.3.peg.134"/>
<dbReference type="HOGENOM" id="CLU_067042_0_0_0"/>
<dbReference type="GO" id="GO:0005576">
    <property type="term" value="C:extracellular region"/>
    <property type="evidence" value="ECO:0007669"/>
    <property type="project" value="UniProtKB-SubCell"/>
</dbReference>
<dbReference type="GO" id="GO:0033644">
    <property type="term" value="C:host cell membrane"/>
    <property type="evidence" value="ECO:0007669"/>
    <property type="project" value="UniProtKB-KW"/>
</dbReference>
<dbReference type="GO" id="GO:0140221">
    <property type="term" value="C:pathogen-containing vacuole membrane"/>
    <property type="evidence" value="ECO:0007669"/>
    <property type="project" value="UniProtKB-SubCell"/>
</dbReference>
<feature type="chain" id="PRO_0000400079" description="Inclusion membrane protein A">
    <location>
        <begin position="1"/>
        <end position="273"/>
    </location>
</feature>
<feature type="transmembrane region" description="Helical" evidence="3">
    <location>
        <begin position="41"/>
        <end position="61"/>
    </location>
</feature>
<feature type="transmembrane region" description="Helical" evidence="3">
    <location>
        <begin position="64"/>
        <end position="84"/>
    </location>
</feature>
<feature type="region of interest" description="Disordered" evidence="4">
    <location>
        <begin position="1"/>
        <end position="20"/>
    </location>
</feature>
<feature type="region of interest" description="Disordered" evidence="4">
    <location>
        <begin position="254"/>
        <end position="273"/>
    </location>
</feature>
<feature type="coiled-coil region" evidence="3">
    <location>
        <begin position="172"/>
        <end position="233"/>
    </location>
</feature>